<proteinExistence type="inferred from homology"/>
<gene>
    <name evidence="1" type="primary">pheT</name>
    <name type="ordered locus">TV0605</name>
    <name type="ORF">TVG0596849</name>
</gene>
<name>SYFB_THEVO</name>
<reference key="1">
    <citation type="journal article" date="2000" name="Proc. Natl. Acad. Sci. U.S.A.">
        <title>Archaeal adaptation to higher temperatures revealed by genomic sequence of Thermoplasma volcanium.</title>
        <authorList>
            <person name="Kawashima T."/>
            <person name="Amano N."/>
            <person name="Koike H."/>
            <person name="Makino S."/>
            <person name="Higuchi S."/>
            <person name="Kawashima-Ohya Y."/>
            <person name="Watanabe K."/>
            <person name="Yamazaki M."/>
            <person name="Kanehori K."/>
            <person name="Kawamoto T."/>
            <person name="Nunoshiba T."/>
            <person name="Yamamoto Y."/>
            <person name="Aramaki H."/>
            <person name="Makino K."/>
            <person name="Suzuki M."/>
        </authorList>
    </citation>
    <scope>NUCLEOTIDE SEQUENCE [LARGE SCALE GENOMIC DNA]</scope>
    <source>
        <strain>ATCC 51530 / DSM 4299 / JCM 9571 / NBRC 15438 / GSS1</strain>
    </source>
</reference>
<dbReference type="EC" id="6.1.1.20" evidence="1"/>
<dbReference type="EMBL" id="BA000011">
    <property type="protein sequence ID" value="BAB59747.1"/>
    <property type="molecule type" value="Genomic_DNA"/>
</dbReference>
<dbReference type="RefSeq" id="WP_010916863.1">
    <property type="nucleotide sequence ID" value="NC_002689.2"/>
</dbReference>
<dbReference type="SMR" id="Q97B53"/>
<dbReference type="STRING" id="273116.gene:9381393"/>
<dbReference type="PaxDb" id="273116-14324820"/>
<dbReference type="GeneID" id="1441711"/>
<dbReference type="KEGG" id="tvo:TVG0596849"/>
<dbReference type="eggNOG" id="arCOG00412">
    <property type="taxonomic scope" value="Archaea"/>
</dbReference>
<dbReference type="HOGENOM" id="CLU_020279_3_0_2"/>
<dbReference type="OrthoDB" id="10073at2157"/>
<dbReference type="PhylomeDB" id="Q97B53"/>
<dbReference type="Proteomes" id="UP000001017">
    <property type="component" value="Chromosome"/>
</dbReference>
<dbReference type="GO" id="GO:0009328">
    <property type="term" value="C:phenylalanine-tRNA ligase complex"/>
    <property type="evidence" value="ECO:0007669"/>
    <property type="project" value="TreeGrafter"/>
</dbReference>
<dbReference type="GO" id="GO:0005524">
    <property type="term" value="F:ATP binding"/>
    <property type="evidence" value="ECO:0007669"/>
    <property type="project" value="UniProtKB-UniRule"/>
</dbReference>
<dbReference type="GO" id="GO:0000287">
    <property type="term" value="F:magnesium ion binding"/>
    <property type="evidence" value="ECO:0007669"/>
    <property type="project" value="InterPro"/>
</dbReference>
<dbReference type="GO" id="GO:0004826">
    <property type="term" value="F:phenylalanine-tRNA ligase activity"/>
    <property type="evidence" value="ECO:0007669"/>
    <property type="project" value="UniProtKB-UniRule"/>
</dbReference>
<dbReference type="GO" id="GO:0003723">
    <property type="term" value="F:RNA binding"/>
    <property type="evidence" value="ECO:0007669"/>
    <property type="project" value="InterPro"/>
</dbReference>
<dbReference type="GO" id="GO:0006432">
    <property type="term" value="P:phenylalanyl-tRNA aminoacylation"/>
    <property type="evidence" value="ECO:0007669"/>
    <property type="project" value="UniProtKB-UniRule"/>
</dbReference>
<dbReference type="Gene3D" id="3.30.56.10">
    <property type="match status" value="1"/>
</dbReference>
<dbReference type="Gene3D" id="3.30.930.10">
    <property type="entry name" value="Bira Bifunctional Protein, Domain 2"/>
    <property type="match status" value="1"/>
</dbReference>
<dbReference type="Gene3D" id="3.50.40.10">
    <property type="entry name" value="Phenylalanyl-trna Synthetase, Chain B, domain 3"/>
    <property type="match status" value="1"/>
</dbReference>
<dbReference type="HAMAP" id="MF_00284">
    <property type="entry name" value="Phe_tRNA_synth_beta2"/>
    <property type="match status" value="1"/>
</dbReference>
<dbReference type="InterPro" id="IPR045864">
    <property type="entry name" value="aa-tRNA-synth_II/BPL/LPL"/>
</dbReference>
<dbReference type="InterPro" id="IPR005146">
    <property type="entry name" value="B3/B4_tRNA-bd"/>
</dbReference>
<dbReference type="InterPro" id="IPR009061">
    <property type="entry name" value="DNA-bd_dom_put_sf"/>
</dbReference>
<dbReference type="InterPro" id="IPR045060">
    <property type="entry name" value="Phe-tRNA-ligase_IIc_bsu"/>
</dbReference>
<dbReference type="InterPro" id="IPR004531">
    <property type="entry name" value="Phe-tRNA-synth_IIc_bsu_arc_euk"/>
</dbReference>
<dbReference type="InterPro" id="IPR020825">
    <property type="entry name" value="Phe-tRNA_synthase-like_B3/B4"/>
</dbReference>
<dbReference type="InterPro" id="IPR022918">
    <property type="entry name" value="Phe_tRNA_ligase_beta2_arc"/>
</dbReference>
<dbReference type="InterPro" id="IPR041616">
    <property type="entry name" value="PheRS_beta_core"/>
</dbReference>
<dbReference type="InterPro" id="IPR005147">
    <property type="entry name" value="tRNA_synthase_B5-dom"/>
</dbReference>
<dbReference type="NCBIfam" id="TIGR00471">
    <property type="entry name" value="pheT_arch"/>
    <property type="match status" value="1"/>
</dbReference>
<dbReference type="PANTHER" id="PTHR10947:SF0">
    <property type="entry name" value="PHENYLALANINE--TRNA LIGASE BETA SUBUNIT"/>
    <property type="match status" value="1"/>
</dbReference>
<dbReference type="PANTHER" id="PTHR10947">
    <property type="entry name" value="PHENYLALANYL-TRNA SYNTHETASE BETA CHAIN AND LEUCINE-RICH REPEAT-CONTAINING PROTEIN 47"/>
    <property type="match status" value="1"/>
</dbReference>
<dbReference type="Pfam" id="PF03484">
    <property type="entry name" value="B5"/>
    <property type="match status" value="1"/>
</dbReference>
<dbReference type="Pfam" id="PF17759">
    <property type="entry name" value="tRNA_synthFbeta"/>
    <property type="match status" value="1"/>
</dbReference>
<dbReference type="SMART" id="SM00873">
    <property type="entry name" value="B3_4"/>
    <property type="match status" value="1"/>
</dbReference>
<dbReference type="SMART" id="SM00874">
    <property type="entry name" value="B5"/>
    <property type="match status" value="1"/>
</dbReference>
<dbReference type="SUPFAM" id="SSF55681">
    <property type="entry name" value="Class II aaRS and biotin synthetases"/>
    <property type="match status" value="1"/>
</dbReference>
<dbReference type="SUPFAM" id="SSF46955">
    <property type="entry name" value="Putative DNA-binding domain"/>
    <property type="match status" value="1"/>
</dbReference>
<dbReference type="PROSITE" id="PS51483">
    <property type="entry name" value="B5"/>
    <property type="match status" value="1"/>
</dbReference>
<comment type="catalytic activity">
    <reaction evidence="1">
        <text>tRNA(Phe) + L-phenylalanine + ATP = L-phenylalanyl-tRNA(Phe) + AMP + diphosphate + H(+)</text>
        <dbReference type="Rhea" id="RHEA:19413"/>
        <dbReference type="Rhea" id="RHEA-COMP:9668"/>
        <dbReference type="Rhea" id="RHEA-COMP:9699"/>
        <dbReference type="ChEBI" id="CHEBI:15378"/>
        <dbReference type="ChEBI" id="CHEBI:30616"/>
        <dbReference type="ChEBI" id="CHEBI:33019"/>
        <dbReference type="ChEBI" id="CHEBI:58095"/>
        <dbReference type="ChEBI" id="CHEBI:78442"/>
        <dbReference type="ChEBI" id="CHEBI:78531"/>
        <dbReference type="ChEBI" id="CHEBI:456215"/>
        <dbReference type="EC" id="6.1.1.20"/>
    </reaction>
</comment>
<comment type="cofactor">
    <cofactor evidence="1">
        <name>Mg(2+)</name>
        <dbReference type="ChEBI" id="CHEBI:18420"/>
    </cofactor>
</comment>
<comment type="subunit">
    <text evidence="1">Tetramer of two alpha and two beta subunits.</text>
</comment>
<comment type="subcellular location">
    <subcellularLocation>
        <location evidence="1">Cytoplasm</location>
    </subcellularLocation>
</comment>
<comment type="similarity">
    <text evidence="1 2">Belongs to the phenylalanyl-tRNA synthetase beta subunit family. Type 2 subfamily.</text>
</comment>
<evidence type="ECO:0000255" key="1">
    <source>
        <dbReference type="HAMAP-Rule" id="MF_00284"/>
    </source>
</evidence>
<evidence type="ECO:0000305" key="2"/>
<feature type="chain" id="PRO_0000127015" description="Phenylalanine--tRNA ligase beta subunit">
    <location>
        <begin position="1"/>
        <end position="537"/>
    </location>
</feature>
<feature type="domain" description="B5" evidence="1">
    <location>
        <begin position="268"/>
        <end position="343"/>
    </location>
</feature>
<feature type="binding site" evidence="1">
    <location>
        <position position="321"/>
    </location>
    <ligand>
        <name>Mg(2+)</name>
        <dbReference type="ChEBI" id="CHEBI:18420"/>
        <note>shared with alpha subunit</note>
    </ligand>
</feature>
<feature type="binding site" evidence="1">
    <location>
        <position position="327"/>
    </location>
    <ligand>
        <name>Mg(2+)</name>
        <dbReference type="ChEBI" id="CHEBI:18420"/>
        <note>shared with alpha subunit</note>
    </ligand>
</feature>
<feature type="binding site" evidence="1">
    <location>
        <position position="330"/>
    </location>
    <ligand>
        <name>Mg(2+)</name>
        <dbReference type="ChEBI" id="CHEBI:18420"/>
        <note>shared with alpha subunit</note>
    </ligand>
</feature>
<feature type="binding site" evidence="1">
    <location>
        <position position="331"/>
    </location>
    <ligand>
        <name>Mg(2+)</name>
        <dbReference type="ChEBI" id="CHEBI:18420"/>
        <note>shared with alpha subunit</note>
    </ligand>
</feature>
<sequence>MVVVRRLRQSLVDEYGKEIYSLLKSFADVIGYSFEDEEEIKIEFNPDRPDLFSIPTLVGAAKIFYYNEPIVRSLFQASEIEVAISEGVSFIRPYFAGFVAEGPSIGSKLDDLIDYQEIIHQTVGKERKKVSIGIHDLDKTEPPFRYTTISKLERMKTYDSFEGTIEDVLQKHPKGMAYSSLLPDSRRVPAILDKNGGILSVPPIVNGIMTKIEPETRKFFVDITGMDSNSVKYAFYLLANFFQSSKYRISLPKIKGSYGPSKKEILDFNFRPYRLNLKYVSRYLGDKVSEENVILNLRKMGYVAEPGYPEVMVYVPGFRVDVMGLVDIIEDFIKSYGIENVREQYVSPGTIGSPNIFNEIKEKIRDVVVGLGFQEVMTFVLTGKYYQEDFQGEVRIENPKSEDYSVIRDRLYLNLLDLLARNKKHPLPQRIFEIGDVIVHGKQETHLCVMVEDNRSGVSTSKSILTSFLKRFSDHESKISGKKIYGCIEGRSGEIFLSGKSIGVIGEVHPSTLENFGLVNPISFFEINIQELIDQHQ</sequence>
<keyword id="KW-0030">Aminoacyl-tRNA synthetase</keyword>
<keyword id="KW-0067">ATP-binding</keyword>
<keyword id="KW-0963">Cytoplasm</keyword>
<keyword id="KW-0436">Ligase</keyword>
<keyword id="KW-0460">Magnesium</keyword>
<keyword id="KW-0479">Metal-binding</keyword>
<keyword id="KW-0547">Nucleotide-binding</keyword>
<keyword id="KW-0648">Protein biosynthesis</keyword>
<organism>
    <name type="scientific">Thermoplasma volcanium (strain ATCC 51530 / DSM 4299 / JCM 9571 / NBRC 15438 / GSS1)</name>
    <dbReference type="NCBI Taxonomy" id="273116"/>
    <lineage>
        <taxon>Archaea</taxon>
        <taxon>Methanobacteriati</taxon>
        <taxon>Thermoplasmatota</taxon>
        <taxon>Thermoplasmata</taxon>
        <taxon>Thermoplasmatales</taxon>
        <taxon>Thermoplasmataceae</taxon>
        <taxon>Thermoplasma</taxon>
    </lineage>
</organism>
<accession>Q97B53</accession>
<protein>
    <recommendedName>
        <fullName evidence="1">Phenylalanine--tRNA ligase beta subunit</fullName>
        <ecNumber evidence="1">6.1.1.20</ecNumber>
    </recommendedName>
    <alternativeName>
        <fullName evidence="1">Phenylalanyl-tRNA synthetase beta subunit</fullName>
        <shortName evidence="1">PheRS</shortName>
    </alternativeName>
</protein>